<feature type="chain" id="PRO_0000272450" description="Phosphate import ATP-binding protein PstB">
    <location>
        <begin position="1"/>
        <end position="253"/>
    </location>
</feature>
<feature type="domain" description="ABC transporter" evidence="1">
    <location>
        <begin position="7"/>
        <end position="249"/>
    </location>
</feature>
<feature type="binding site" evidence="1">
    <location>
        <begin position="39"/>
        <end position="46"/>
    </location>
    <ligand>
        <name>ATP</name>
        <dbReference type="ChEBI" id="CHEBI:30616"/>
    </ligand>
</feature>
<proteinExistence type="inferred from homology"/>
<sequence length="253" mass="28547">MSIEIHASAKNLNLWYDSNQVLHNISLDIYKREVTAFIGPSGCGKSTFLRCFNRMNDFVSNCKIKGELIIENIDVCSVNTNVVLLRAKVGMVFQKPNPFPKSIYDNVAYGPKLHGLAKNKKKLDEIVEKSLTSVGLWEELSDRLKDNAFELSGGQQQRLCIARAIAVKPTMLLMDEPCSALDPFATSVIENLIQNLKKNFTIIVVTHSMKQARKVSDKVAFFESGKLIEYNTTDEIFKNPQSSKTKRYIVDHL</sequence>
<organism>
    <name type="scientific">Ehrlichia ruminantium (strain Gardel)</name>
    <dbReference type="NCBI Taxonomy" id="302409"/>
    <lineage>
        <taxon>Bacteria</taxon>
        <taxon>Pseudomonadati</taxon>
        <taxon>Pseudomonadota</taxon>
        <taxon>Alphaproteobacteria</taxon>
        <taxon>Rickettsiales</taxon>
        <taxon>Anaplasmataceae</taxon>
        <taxon>Ehrlichia</taxon>
    </lineage>
</organism>
<name>PSTB_EHRRG</name>
<dbReference type="EC" id="7.3.2.1" evidence="1"/>
<dbReference type="EMBL" id="CR925677">
    <property type="protein sequence ID" value="CAI28048.1"/>
    <property type="molecule type" value="Genomic_DNA"/>
</dbReference>
<dbReference type="RefSeq" id="WP_011155256.1">
    <property type="nucleotide sequence ID" value="NC_006831.1"/>
</dbReference>
<dbReference type="SMR" id="Q5FFT1"/>
<dbReference type="GeneID" id="33057618"/>
<dbReference type="KEGG" id="erg:ERGA_CDS_05960"/>
<dbReference type="HOGENOM" id="CLU_000604_1_22_5"/>
<dbReference type="OrthoDB" id="9802264at2"/>
<dbReference type="Proteomes" id="UP000000533">
    <property type="component" value="Chromosome"/>
</dbReference>
<dbReference type="GO" id="GO:0005886">
    <property type="term" value="C:plasma membrane"/>
    <property type="evidence" value="ECO:0007669"/>
    <property type="project" value="UniProtKB-SubCell"/>
</dbReference>
<dbReference type="GO" id="GO:0005524">
    <property type="term" value="F:ATP binding"/>
    <property type="evidence" value="ECO:0007669"/>
    <property type="project" value="UniProtKB-KW"/>
</dbReference>
<dbReference type="GO" id="GO:0016887">
    <property type="term" value="F:ATP hydrolysis activity"/>
    <property type="evidence" value="ECO:0007669"/>
    <property type="project" value="InterPro"/>
</dbReference>
<dbReference type="GO" id="GO:0015415">
    <property type="term" value="F:ATPase-coupled phosphate ion transmembrane transporter activity"/>
    <property type="evidence" value="ECO:0007669"/>
    <property type="project" value="UniProtKB-EC"/>
</dbReference>
<dbReference type="GO" id="GO:0035435">
    <property type="term" value="P:phosphate ion transmembrane transport"/>
    <property type="evidence" value="ECO:0007669"/>
    <property type="project" value="InterPro"/>
</dbReference>
<dbReference type="CDD" id="cd03260">
    <property type="entry name" value="ABC_PstB_phosphate_transporter"/>
    <property type="match status" value="1"/>
</dbReference>
<dbReference type="Gene3D" id="3.40.50.300">
    <property type="entry name" value="P-loop containing nucleotide triphosphate hydrolases"/>
    <property type="match status" value="1"/>
</dbReference>
<dbReference type="InterPro" id="IPR003593">
    <property type="entry name" value="AAA+_ATPase"/>
</dbReference>
<dbReference type="InterPro" id="IPR003439">
    <property type="entry name" value="ABC_transporter-like_ATP-bd"/>
</dbReference>
<dbReference type="InterPro" id="IPR017871">
    <property type="entry name" value="ABC_transporter-like_CS"/>
</dbReference>
<dbReference type="InterPro" id="IPR027417">
    <property type="entry name" value="P-loop_NTPase"/>
</dbReference>
<dbReference type="InterPro" id="IPR005670">
    <property type="entry name" value="PstB-like"/>
</dbReference>
<dbReference type="NCBIfam" id="TIGR00972">
    <property type="entry name" value="3a0107s01c2"/>
    <property type="match status" value="1"/>
</dbReference>
<dbReference type="PANTHER" id="PTHR43423">
    <property type="entry name" value="ABC TRANSPORTER I FAMILY MEMBER 17"/>
    <property type="match status" value="1"/>
</dbReference>
<dbReference type="PANTHER" id="PTHR43423:SF1">
    <property type="entry name" value="ABC TRANSPORTER I FAMILY MEMBER 17"/>
    <property type="match status" value="1"/>
</dbReference>
<dbReference type="Pfam" id="PF00005">
    <property type="entry name" value="ABC_tran"/>
    <property type="match status" value="1"/>
</dbReference>
<dbReference type="SMART" id="SM00382">
    <property type="entry name" value="AAA"/>
    <property type="match status" value="1"/>
</dbReference>
<dbReference type="SUPFAM" id="SSF52540">
    <property type="entry name" value="P-loop containing nucleoside triphosphate hydrolases"/>
    <property type="match status" value="1"/>
</dbReference>
<dbReference type="PROSITE" id="PS00211">
    <property type="entry name" value="ABC_TRANSPORTER_1"/>
    <property type="match status" value="1"/>
</dbReference>
<dbReference type="PROSITE" id="PS50893">
    <property type="entry name" value="ABC_TRANSPORTER_2"/>
    <property type="match status" value="1"/>
</dbReference>
<dbReference type="PROSITE" id="PS51238">
    <property type="entry name" value="PSTB"/>
    <property type="match status" value="1"/>
</dbReference>
<protein>
    <recommendedName>
        <fullName evidence="1">Phosphate import ATP-binding protein PstB</fullName>
        <ecNumber evidence="1">7.3.2.1</ecNumber>
    </recommendedName>
    <alternativeName>
        <fullName evidence="1">ABC phosphate transporter</fullName>
    </alternativeName>
    <alternativeName>
        <fullName evidence="1">Phosphate-transporting ATPase</fullName>
    </alternativeName>
</protein>
<gene>
    <name evidence="1" type="primary">pstB</name>
    <name type="ordered locus">ERGA_CDS_05960</name>
</gene>
<reference key="1">
    <citation type="journal article" date="2006" name="J. Bacteriol.">
        <title>Comparative genomic analysis of three strains of Ehrlichia ruminantium reveals an active process of genome size plasticity.</title>
        <authorList>
            <person name="Frutos R."/>
            <person name="Viari A."/>
            <person name="Ferraz C."/>
            <person name="Morgat A."/>
            <person name="Eychenie S."/>
            <person name="Kandassamy Y."/>
            <person name="Chantal I."/>
            <person name="Bensaid A."/>
            <person name="Coissac E."/>
            <person name="Vachiery N."/>
            <person name="Demaille J."/>
            <person name="Martinez D."/>
        </authorList>
    </citation>
    <scope>NUCLEOTIDE SEQUENCE [LARGE SCALE GENOMIC DNA]</scope>
    <source>
        <strain>Gardel</strain>
    </source>
</reference>
<accession>Q5FFT1</accession>
<keyword id="KW-0067">ATP-binding</keyword>
<keyword id="KW-0997">Cell inner membrane</keyword>
<keyword id="KW-1003">Cell membrane</keyword>
<keyword id="KW-0472">Membrane</keyword>
<keyword id="KW-0547">Nucleotide-binding</keyword>
<keyword id="KW-0592">Phosphate transport</keyword>
<keyword id="KW-1278">Translocase</keyword>
<keyword id="KW-0813">Transport</keyword>
<evidence type="ECO:0000255" key="1">
    <source>
        <dbReference type="HAMAP-Rule" id="MF_01702"/>
    </source>
</evidence>
<comment type="function">
    <text evidence="1">Part of the ABC transporter complex PstSACB involved in phosphate import. Responsible for energy coupling to the transport system.</text>
</comment>
<comment type="catalytic activity">
    <reaction evidence="1">
        <text>phosphate(out) + ATP + H2O = ADP + 2 phosphate(in) + H(+)</text>
        <dbReference type="Rhea" id="RHEA:24440"/>
        <dbReference type="ChEBI" id="CHEBI:15377"/>
        <dbReference type="ChEBI" id="CHEBI:15378"/>
        <dbReference type="ChEBI" id="CHEBI:30616"/>
        <dbReference type="ChEBI" id="CHEBI:43474"/>
        <dbReference type="ChEBI" id="CHEBI:456216"/>
        <dbReference type="EC" id="7.3.2.1"/>
    </reaction>
</comment>
<comment type="subunit">
    <text evidence="1">The complex is composed of two ATP-binding proteins (PstB), two transmembrane proteins (PstC and PstA) and a solute-binding protein (PstS).</text>
</comment>
<comment type="subcellular location">
    <subcellularLocation>
        <location evidence="1">Cell inner membrane</location>
        <topology evidence="1">Peripheral membrane protein</topology>
    </subcellularLocation>
</comment>
<comment type="similarity">
    <text evidence="1">Belongs to the ABC transporter superfamily. Phosphate importer (TC 3.A.1.7) family.</text>
</comment>